<evidence type="ECO:0000250" key="1"/>
<evidence type="ECO:0000255" key="2">
    <source>
        <dbReference type="PROSITE-ProRule" id="PRU00434"/>
    </source>
</evidence>
<evidence type="ECO:0000256" key="3">
    <source>
        <dbReference type="SAM" id="MobiDB-lite"/>
    </source>
</evidence>
<evidence type="ECO:0000305" key="4"/>
<accession>Q8YDH1</accession>
<sequence>MPLRPALHLRTGKLRQTPTHNEPDGWAGQPLSAAAAHRGVCPMSDVMTANRRSFLAEDGKETIVRTDDLVRDFDLGHRPEGGRLVLRAVDKVSLTIRRGETLGLVGESGSGKSTIGRMLVGLLPYTSGNIELFGQKIEPRAKAAAWKPLRRRVQFVFQDPHAALNPRMRVGTAIAEPLDVAGNLTRKERSARVDELMELVGLPTSFARRFPHEFSGGQRQRIVIARALALNPEILVCDEAVASLDVSMQAQIVNLLKDLQDQLGLSHLFIAHDLAVVRAVSHRVAVLYAGQIVETGPRTALYSDPLHPYSRALLDSVPRARRGAPRSIIAGEVPSLLNKPKGCAFCPRCPKAMDICRDVPPPLRVIGDREVACHLY</sequence>
<reference key="1">
    <citation type="journal article" date="2002" name="Proc. Natl. Acad. Sci. U.S.A.">
        <title>The genome sequence of the facultative intracellular pathogen Brucella melitensis.</title>
        <authorList>
            <person name="DelVecchio V.G."/>
            <person name="Kapatral V."/>
            <person name="Redkar R.J."/>
            <person name="Patra G."/>
            <person name="Mujer C."/>
            <person name="Los T."/>
            <person name="Ivanova N."/>
            <person name="Anderson I."/>
            <person name="Bhattacharyya A."/>
            <person name="Lykidis A."/>
            <person name="Reznik G."/>
            <person name="Jablonski L."/>
            <person name="Larsen N."/>
            <person name="D'Souza M."/>
            <person name="Bernal A."/>
            <person name="Mazur M."/>
            <person name="Goltsman E."/>
            <person name="Selkov E."/>
            <person name="Elzer P.H."/>
            <person name="Hagius S."/>
            <person name="O'Callaghan D."/>
            <person name="Letesson J.-J."/>
            <person name="Haselkorn R."/>
            <person name="Kyrpides N.C."/>
            <person name="Overbeek R."/>
        </authorList>
    </citation>
    <scope>NUCLEOTIDE SEQUENCE [LARGE SCALE GENOMIC DNA]</scope>
    <source>
        <strain>ATCC 23456 / CCUG 17765 / NCTC 10094 / 16M</strain>
    </source>
</reference>
<protein>
    <recommendedName>
        <fullName>Putative peptide import ATP-binding protein BMEII0205</fullName>
        <ecNumber>7.4.2.-</ecNumber>
    </recommendedName>
</protein>
<keyword id="KW-0067">ATP-binding</keyword>
<keyword id="KW-0997">Cell inner membrane</keyword>
<keyword id="KW-1003">Cell membrane</keyword>
<keyword id="KW-0472">Membrane</keyword>
<keyword id="KW-0547">Nucleotide-binding</keyword>
<keyword id="KW-0571">Peptide transport</keyword>
<keyword id="KW-0653">Protein transport</keyword>
<keyword id="KW-1278">Translocase</keyword>
<keyword id="KW-0813">Transport</keyword>
<comment type="function">
    <text evidence="1">Probably part of an ABC transporter complex that could be involved in peptide import. Probably responsible for energy coupling to the transport system (By similarity).</text>
</comment>
<comment type="subunit">
    <text evidence="4">The complex is composed of two ATP-binding proteins (BMEII0205 and BMEII0206), two transmembrane proteins (BMEII0207/BMEII0208 and BMEII0209) and a solute-binding protein (BMEII0210).</text>
</comment>
<comment type="subcellular location">
    <subcellularLocation>
        <location evidence="4">Cell inner membrane</location>
        <topology evidence="4">Peripheral membrane protein</topology>
    </subcellularLocation>
</comment>
<comment type="similarity">
    <text evidence="4">Belongs to the ABC transporter superfamily.</text>
</comment>
<organism>
    <name type="scientific">Brucella melitensis biotype 1 (strain ATCC 23456 / CCUG 17765 / NCTC 10094 / 16M)</name>
    <dbReference type="NCBI Taxonomy" id="224914"/>
    <lineage>
        <taxon>Bacteria</taxon>
        <taxon>Pseudomonadati</taxon>
        <taxon>Pseudomonadota</taxon>
        <taxon>Alphaproteobacteria</taxon>
        <taxon>Hyphomicrobiales</taxon>
        <taxon>Brucellaceae</taxon>
        <taxon>Brucella/Ochrobactrum group</taxon>
        <taxon>Brucella</taxon>
    </lineage>
</organism>
<dbReference type="EC" id="7.4.2.-"/>
<dbReference type="EMBL" id="AE008918">
    <property type="protein sequence ID" value="AAL53446.1"/>
    <property type="molecule type" value="Genomic_DNA"/>
</dbReference>
<dbReference type="PIR" id="AC3535">
    <property type="entry name" value="AC3535"/>
</dbReference>
<dbReference type="SMR" id="Q8YDH1"/>
<dbReference type="KEGG" id="bme:BMEII0205"/>
<dbReference type="eggNOG" id="COG4608">
    <property type="taxonomic scope" value="Bacteria"/>
</dbReference>
<dbReference type="Proteomes" id="UP000000419">
    <property type="component" value="Chromosome II"/>
</dbReference>
<dbReference type="GO" id="GO:0005886">
    <property type="term" value="C:plasma membrane"/>
    <property type="evidence" value="ECO:0007669"/>
    <property type="project" value="UniProtKB-SubCell"/>
</dbReference>
<dbReference type="GO" id="GO:0005524">
    <property type="term" value="F:ATP binding"/>
    <property type="evidence" value="ECO:0007669"/>
    <property type="project" value="UniProtKB-KW"/>
</dbReference>
<dbReference type="GO" id="GO:0016887">
    <property type="term" value="F:ATP hydrolysis activity"/>
    <property type="evidence" value="ECO:0007669"/>
    <property type="project" value="InterPro"/>
</dbReference>
<dbReference type="GO" id="GO:0015833">
    <property type="term" value="P:peptide transport"/>
    <property type="evidence" value="ECO:0007669"/>
    <property type="project" value="UniProtKB-KW"/>
</dbReference>
<dbReference type="GO" id="GO:0015031">
    <property type="term" value="P:protein transport"/>
    <property type="evidence" value="ECO:0007669"/>
    <property type="project" value="UniProtKB-KW"/>
</dbReference>
<dbReference type="GO" id="GO:0055085">
    <property type="term" value="P:transmembrane transport"/>
    <property type="evidence" value="ECO:0007669"/>
    <property type="project" value="UniProtKB-ARBA"/>
</dbReference>
<dbReference type="CDD" id="cd03257">
    <property type="entry name" value="ABC_NikE_OppD_transporters"/>
    <property type="match status" value="1"/>
</dbReference>
<dbReference type="FunFam" id="3.40.50.300:FF:000016">
    <property type="entry name" value="Oligopeptide ABC transporter ATP-binding component"/>
    <property type="match status" value="1"/>
</dbReference>
<dbReference type="Gene3D" id="3.40.50.300">
    <property type="entry name" value="P-loop containing nucleotide triphosphate hydrolases"/>
    <property type="match status" value="1"/>
</dbReference>
<dbReference type="InterPro" id="IPR003593">
    <property type="entry name" value="AAA+_ATPase"/>
</dbReference>
<dbReference type="InterPro" id="IPR050319">
    <property type="entry name" value="ABC_transp_ATP-bind"/>
</dbReference>
<dbReference type="InterPro" id="IPR003439">
    <property type="entry name" value="ABC_transporter-like_ATP-bd"/>
</dbReference>
<dbReference type="InterPro" id="IPR017871">
    <property type="entry name" value="ABC_transporter-like_CS"/>
</dbReference>
<dbReference type="InterPro" id="IPR013563">
    <property type="entry name" value="Oligopep_ABC_C"/>
</dbReference>
<dbReference type="InterPro" id="IPR027417">
    <property type="entry name" value="P-loop_NTPase"/>
</dbReference>
<dbReference type="NCBIfam" id="TIGR01727">
    <property type="entry name" value="oligo_HPY"/>
    <property type="match status" value="1"/>
</dbReference>
<dbReference type="PANTHER" id="PTHR43776:SF7">
    <property type="entry name" value="D,D-DIPEPTIDE TRANSPORT ATP-BINDING PROTEIN DDPF-RELATED"/>
    <property type="match status" value="1"/>
</dbReference>
<dbReference type="PANTHER" id="PTHR43776">
    <property type="entry name" value="TRANSPORT ATP-BINDING PROTEIN"/>
    <property type="match status" value="1"/>
</dbReference>
<dbReference type="Pfam" id="PF00005">
    <property type="entry name" value="ABC_tran"/>
    <property type="match status" value="1"/>
</dbReference>
<dbReference type="Pfam" id="PF08352">
    <property type="entry name" value="oligo_HPY"/>
    <property type="match status" value="1"/>
</dbReference>
<dbReference type="SMART" id="SM00382">
    <property type="entry name" value="AAA"/>
    <property type="match status" value="1"/>
</dbReference>
<dbReference type="SUPFAM" id="SSF52540">
    <property type="entry name" value="P-loop containing nucleoside triphosphate hydrolases"/>
    <property type="match status" value="1"/>
</dbReference>
<dbReference type="PROSITE" id="PS00211">
    <property type="entry name" value="ABC_TRANSPORTER_1"/>
    <property type="match status" value="1"/>
</dbReference>
<dbReference type="PROSITE" id="PS50893">
    <property type="entry name" value="ABC_TRANSPORTER_2"/>
    <property type="match status" value="1"/>
</dbReference>
<gene>
    <name type="ordered locus">BMEII0205</name>
</gene>
<feature type="chain" id="PRO_0000290158" description="Putative peptide import ATP-binding protein BMEII0205">
    <location>
        <begin position="1"/>
        <end position="376"/>
    </location>
</feature>
<feature type="domain" description="ABC transporter" evidence="2">
    <location>
        <begin position="64"/>
        <end position="314"/>
    </location>
</feature>
<feature type="region of interest" description="Disordered" evidence="3">
    <location>
        <begin position="1"/>
        <end position="25"/>
    </location>
</feature>
<feature type="binding site" evidence="2">
    <location>
        <begin position="106"/>
        <end position="113"/>
    </location>
    <ligand>
        <name>ATP</name>
        <dbReference type="ChEBI" id="CHEBI:30616"/>
    </ligand>
</feature>
<name>Y205_BRUME</name>
<proteinExistence type="inferred from homology"/>